<proteinExistence type="evidence at protein level"/>
<dbReference type="EC" id="1.-.-.-" evidence="3"/>
<dbReference type="EC" id="6.3.2.-" evidence="3"/>
<dbReference type="EMBL" id="KX443597">
    <property type="protein sequence ID" value="ARJ55264.1"/>
    <property type="molecule type" value="Genomic_DNA"/>
</dbReference>
<dbReference type="SMR" id="A0A1W6BT53"/>
<dbReference type="GO" id="GO:0005737">
    <property type="term" value="C:cytoplasm"/>
    <property type="evidence" value="ECO:0007669"/>
    <property type="project" value="TreeGrafter"/>
</dbReference>
<dbReference type="GO" id="GO:0016874">
    <property type="term" value="F:ligase activity"/>
    <property type="evidence" value="ECO:0007669"/>
    <property type="project" value="UniProtKB-KW"/>
</dbReference>
<dbReference type="GO" id="GO:0016491">
    <property type="term" value="F:oxidoreductase activity"/>
    <property type="evidence" value="ECO:0007669"/>
    <property type="project" value="UniProtKB-KW"/>
</dbReference>
<dbReference type="GO" id="GO:0031177">
    <property type="term" value="F:phosphopantetheine binding"/>
    <property type="evidence" value="ECO:0007669"/>
    <property type="project" value="TreeGrafter"/>
</dbReference>
<dbReference type="GO" id="GO:0043041">
    <property type="term" value="P:amino acid activation for nonribosomal peptide biosynthetic process"/>
    <property type="evidence" value="ECO:0007669"/>
    <property type="project" value="TreeGrafter"/>
</dbReference>
<dbReference type="GO" id="GO:0044550">
    <property type="term" value="P:secondary metabolite biosynthetic process"/>
    <property type="evidence" value="ECO:0007669"/>
    <property type="project" value="TreeGrafter"/>
</dbReference>
<dbReference type="CDD" id="cd05918">
    <property type="entry name" value="A_NRPS_SidN3_like"/>
    <property type="match status" value="2"/>
</dbReference>
<dbReference type="CDD" id="cd19545">
    <property type="entry name" value="FUM14_C_NRPS-like"/>
    <property type="match status" value="1"/>
</dbReference>
<dbReference type="FunFam" id="3.40.50.980:FF:000001">
    <property type="entry name" value="Non-ribosomal peptide synthetase"/>
    <property type="match status" value="2"/>
</dbReference>
<dbReference type="FunFam" id="3.30.300.30:FF:000015">
    <property type="entry name" value="Nonribosomal peptide synthase SidD"/>
    <property type="match status" value="2"/>
</dbReference>
<dbReference type="FunFam" id="3.30.559.30:FF:000003">
    <property type="entry name" value="Nonribosomal peptide synthase SidD"/>
    <property type="match status" value="1"/>
</dbReference>
<dbReference type="FunFam" id="1.10.1200.10:FF:000005">
    <property type="entry name" value="Nonribosomal peptide synthetase 1"/>
    <property type="match status" value="1"/>
</dbReference>
<dbReference type="FunFam" id="3.40.50.12780:FF:000014">
    <property type="entry name" value="Nonribosomal peptide synthetase 1"/>
    <property type="match status" value="2"/>
</dbReference>
<dbReference type="Gene3D" id="3.30.300.30">
    <property type="match status" value="2"/>
</dbReference>
<dbReference type="Gene3D" id="3.40.50.980">
    <property type="match status" value="2"/>
</dbReference>
<dbReference type="Gene3D" id="1.10.1200.10">
    <property type="entry name" value="ACP-like"/>
    <property type="match status" value="1"/>
</dbReference>
<dbReference type="Gene3D" id="3.30.559.10">
    <property type="entry name" value="Chloramphenicol acetyltransferase-like domain"/>
    <property type="match status" value="1"/>
</dbReference>
<dbReference type="Gene3D" id="2.30.38.10">
    <property type="entry name" value="Luciferase, Domain 3"/>
    <property type="match status" value="1"/>
</dbReference>
<dbReference type="Gene3D" id="3.40.50.12780">
    <property type="entry name" value="N-terminal domain of ligase-like"/>
    <property type="match status" value="1"/>
</dbReference>
<dbReference type="Gene3D" id="3.40.50.720">
    <property type="entry name" value="NAD(P)-binding Rossmann-like Domain"/>
    <property type="match status" value="1"/>
</dbReference>
<dbReference type="Gene3D" id="3.30.559.30">
    <property type="entry name" value="Nonribosomal peptide synthetase, condensation domain"/>
    <property type="match status" value="2"/>
</dbReference>
<dbReference type="InterPro" id="IPR010071">
    <property type="entry name" value="AA_adenyl_dom"/>
</dbReference>
<dbReference type="InterPro" id="IPR036736">
    <property type="entry name" value="ACP-like_sf"/>
</dbReference>
<dbReference type="InterPro" id="IPR045851">
    <property type="entry name" value="AMP-bd_C_sf"/>
</dbReference>
<dbReference type="InterPro" id="IPR020845">
    <property type="entry name" value="AMP-binding_CS"/>
</dbReference>
<dbReference type="InterPro" id="IPR000873">
    <property type="entry name" value="AMP-dep_synth/lig_dom"/>
</dbReference>
<dbReference type="InterPro" id="IPR042099">
    <property type="entry name" value="ANL_N_sf"/>
</dbReference>
<dbReference type="InterPro" id="IPR023213">
    <property type="entry name" value="CAT-like_dom_sf"/>
</dbReference>
<dbReference type="InterPro" id="IPR001242">
    <property type="entry name" value="Condensatn"/>
</dbReference>
<dbReference type="InterPro" id="IPR013120">
    <property type="entry name" value="Far_NAD-bd"/>
</dbReference>
<dbReference type="InterPro" id="IPR036291">
    <property type="entry name" value="NAD(P)-bd_dom_sf"/>
</dbReference>
<dbReference type="InterPro" id="IPR009081">
    <property type="entry name" value="PP-bd_ACP"/>
</dbReference>
<dbReference type="NCBIfam" id="TIGR01733">
    <property type="entry name" value="AA-adenyl-dom"/>
    <property type="match status" value="2"/>
</dbReference>
<dbReference type="PANTHER" id="PTHR45527">
    <property type="entry name" value="NONRIBOSOMAL PEPTIDE SYNTHETASE"/>
    <property type="match status" value="1"/>
</dbReference>
<dbReference type="PANTHER" id="PTHR45527:SF12">
    <property type="entry name" value="NONRIBOSOMAL PEPTIDE SYNTHETASE IVOA"/>
    <property type="match status" value="1"/>
</dbReference>
<dbReference type="Pfam" id="PF00501">
    <property type="entry name" value="AMP-binding"/>
    <property type="match status" value="2"/>
</dbReference>
<dbReference type="Pfam" id="PF00668">
    <property type="entry name" value="Condensation"/>
    <property type="match status" value="1"/>
</dbReference>
<dbReference type="Pfam" id="PF07993">
    <property type="entry name" value="NAD_binding_4"/>
    <property type="match status" value="1"/>
</dbReference>
<dbReference type="Pfam" id="PF00550">
    <property type="entry name" value="PP-binding"/>
    <property type="match status" value="2"/>
</dbReference>
<dbReference type="SUPFAM" id="SSF56801">
    <property type="entry name" value="Acetyl-CoA synthetase-like"/>
    <property type="match status" value="2"/>
</dbReference>
<dbReference type="SUPFAM" id="SSF47336">
    <property type="entry name" value="ACP-like"/>
    <property type="match status" value="2"/>
</dbReference>
<dbReference type="SUPFAM" id="SSF52777">
    <property type="entry name" value="CoA-dependent acyltransferases"/>
    <property type="match status" value="3"/>
</dbReference>
<dbReference type="SUPFAM" id="SSF51735">
    <property type="entry name" value="NAD(P)-binding Rossmann-fold domains"/>
    <property type="match status" value="1"/>
</dbReference>
<dbReference type="PROSITE" id="PS00455">
    <property type="entry name" value="AMP_BINDING"/>
    <property type="match status" value="2"/>
</dbReference>
<dbReference type="PROSITE" id="PS50075">
    <property type="entry name" value="CARRIER"/>
    <property type="match status" value="1"/>
</dbReference>
<keyword id="KW-0436">Ligase</keyword>
<keyword id="KW-0560">Oxidoreductase</keyword>
<keyword id="KW-0596">Phosphopantetheine</keyword>
<keyword id="KW-0597">Phosphoprotein</keyword>
<keyword id="KW-0677">Repeat</keyword>
<reference key="1">
    <citation type="journal article" date="2018" name="Chem. Sci.">
        <title>Asperphenamate biosynthesis reveals a novel two-module NRPS system to synthesize amino acid esters in fungi.</title>
        <authorList>
            <person name="Li W."/>
            <person name="Fan A."/>
            <person name="Wang L."/>
            <person name="Zhang P."/>
            <person name="Liu Z."/>
            <person name="An Z."/>
            <person name="Yin W.B."/>
        </authorList>
    </citation>
    <scope>NUCLEOTIDE SEQUENCE [GENOMIC DNA]</scope>
    <scope>IDENTIFICATION</scope>
    <scope>DISRUPTION PHENOTYPE</scope>
    <scope>FUNCTION</scope>
    <scope>CATALYTIC ACTIVITY</scope>
    <scope>DOMAIN</scope>
    <scope>PATHWAY</scope>
</reference>
<protein>
    <recommendedName>
        <fullName evidence="4">N-benzoylphenylalaninol synthetase apmA</fullName>
        <ecNumber evidence="3">1.-.-.-</ecNumber>
        <ecNumber evidence="3">6.3.2.-</ecNumber>
    </recommendedName>
    <alternativeName>
        <fullName evidence="4">Asperphenamate biosynthesis cluster protein A</fullName>
    </alternativeName>
    <alternativeName>
        <fullName evidence="4">Nonribosomal peptide synthase apmA</fullName>
    </alternativeName>
</protein>
<organism>
    <name type="scientific">Penicillium brevicompactum</name>
    <dbReference type="NCBI Taxonomy" id="5074"/>
    <lineage>
        <taxon>Eukaryota</taxon>
        <taxon>Fungi</taxon>
        <taxon>Dikarya</taxon>
        <taxon>Ascomycota</taxon>
        <taxon>Pezizomycotina</taxon>
        <taxon>Eurotiomycetes</taxon>
        <taxon>Eurotiomycetidae</taxon>
        <taxon>Eurotiales</taxon>
        <taxon>Aspergillaceae</taxon>
        <taxon>Penicillium</taxon>
    </lineage>
</organism>
<gene>
    <name evidence="4" type="primary">apmA</name>
</gene>
<feature type="chain" id="PRO_0000448646" description="N-benzoylphenylalaninol synthetase apmA">
    <location>
        <begin position="1"/>
        <end position="2346"/>
    </location>
</feature>
<feature type="domain" description="Carrier 1" evidence="2">
    <location>
        <begin position="784"/>
        <end position="860"/>
    </location>
</feature>
<feature type="domain" description="Carrier 2" evidence="2">
    <location>
        <begin position="1842"/>
        <end position="1924"/>
    </location>
</feature>
<feature type="region of interest" description="Adenylation 1" evidence="1 6">
    <location>
        <begin position="263"/>
        <end position="652"/>
    </location>
</feature>
<feature type="region of interest" description="Condensation" evidence="1 6">
    <location>
        <begin position="896"/>
        <end position="1306"/>
    </location>
</feature>
<feature type="region of interest" description="Adenylation 2" evidence="1 6">
    <location>
        <begin position="1330"/>
        <end position="1713"/>
    </location>
</feature>
<feature type="region of interest" description="Reductase (R) domain" evidence="1 6">
    <location>
        <begin position="1960"/>
        <end position="2311"/>
    </location>
</feature>
<feature type="modified residue" description="O-(pantetheine 4'-phosphoryl)serine" evidence="2">
    <location>
        <position position="821"/>
    </location>
</feature>
<feature type="modified residue" description="O-(pantetheine 4'-phosphoryl)serine" evidence="2">
    <location>
        <position position="1883"/>
    </location>
</feature>
<evidence type="ECO:0000255" key="1"/>
<evidence type="ECO:0000255" key="2">
    <source>
        <dbReference type="PROSITE-ProRule" id="PRU00258"/>
    </source>
</evidence>
<evidence type="ECO:0000269" key="3">
    <source>
    </source>
</evidence>
<evidence type="ECO:0000303" key="4">
    <source>
    </source>
</evidence>
<evidence type="ECO:0000305" key="5"/>
<evidence type="ECO:0000305" key="6">
    <source>
    </source>
</evidence>
<name>APMA_PENBR</name>
<sequence>MPSIVIDDADRLRQLWTQLVTDVTPSHLPSGLFSKRETKSTVGRLNVPMQLSAIYDCCQQCDVSPLNVVQAAWTAVLRSYSGADNVMFAGIGMNPRSTKQQWTNTSVSLARLEQDSSVISVLDTTQEEGLLQAESMVSVPEALDIFSSLEPKPCNSAIWLKDAQSKSELSLTDVVNEKTFDYAVQIDASLTQLDLVFHKPTVSRSQAQYIASTFADYLQSVCLDPYQTASTVCHPSELDMMQIDTWNRILPKGSEVCVDQLIESAAQKSPDAQALVGWDGEMSYSQFNQAANKMAAYFDSVGVQRGELVPICFEKSVWTIVTMIGLWKLGAGWVPLDPKHPRQRLETIIESVGARTVIASASNKDLVQDIASQVLILDPSQIQSAPEVDFKSRSQPHDTSFVMFTSGSTGKPKGVVHDHASVASSALNHASAMNISNNTRALQFGAYTFIISTFEIFTTLIFGGCLCIPSDHDRHTDIRPAIRSFEANWAIFTPSFARSLHHEDIPSLDTLLVAGEAVAQDIIDRWAPVAQLINIYGASECSVVMIGRMVADTPRSCIGRATGGLSWLVDPNDHDRLVPIGSVGELVIEGPILARGYLADPEKTQAVYIENPVWASQSGNTRRFYKTGDLARYGDDGRVHLIGRKDLQVKIRGQRVELTEIEAHMRAIDNSVKTAVAMVRPGGKAMLAAFISNQSGFGPEFPHPFYSAPDDKQSVVSLAGQMSKKLTLQLPPYMIPSVFLPLAYMPLTASGKTDRRLIASFGDSLTLTELAAVAGNGKVTERRMPTTTTEMTLRQIWAEILHCPVDEIGAEDNFFHLGGDSIEAMNLTRRCRAEGFQLQVGDILGNLVLSDMAKAMTSTRSLKPSITTPFELLGDDTDAVRANILSATGLPAGLLQDAYPCSPLQMGLMALSAKIPGSYVARHTLELPSSVTVGRFKEVWGMIVESNDVLRTRIVETDEYGSVQVVNRAPLVWAHDTDLAKYIELDEKIPMQIGDALAHFGIIAGPTNTFVLTIHHSIYDGMSLEMIFNDLVHAFEGVVPPVRTQFRDFIKEVVERNADKATEEYWRGEFAEGDMTTFPSLPSASHQPLANDSFVHTLQLNRKGPSDFTSATLIRAAWSLVQARYCDSPETVFGCTLSGRNAPVPGVEDVVGAVIATVPIKAKVDGEQPVAEWLQQINSHSVEMTPAQNYGLQNIARVAEGAAAACNFQSLLVIQPATSVAEDSIMQPFSAPQANFSTVALTLECSLAVDGSIQIHVHFDDTVLPRLEVQRIVRQFEHVLQQLASAPAGKLSDIEIISPQDKENLLQWNRDLAEPVNECVHRLISQNNFSQPNAPAICAWDGELTYTELESLSSKLAAHLINVGVGPDVFVPLCFEKSMWTIVAMLATLKAGGAFVAMDASQPISRMQSVVKDVNAQVVLYSEEQLSRAPGLAAKAIAVGPGMRELNTPRTPPTPVAPSNAAYVIFSSGSTGTPKGSVIEHRAFCTAAVSQKEGLQMGSRVLQFASYAFDASILEILSTLVQGGCVCVPSESERRGNIAEAITRMNVDWAVLTPSFVNTIDPSSVPTLSTLALAGEAMSAAHVAAWTPYVRLVNGYGPSECCVCTTSNRRVLPGTASNNIGTAVGSASWITDRDDHNKLAPIGAIGELLIEGNILARHYLNNPEKTDAAFITQPAWLPGHRSTRVYKTGDLVKYAPDGSILFIGRKDTQVKIRGQRVELGEIEYHLNLPADVSQSVVSYPKSGLYAQKLVGILELNSTAGSDLSVVPSAEFQRSGFQLSSLTHTLSETLPVHMIPVIWIVVRKIPSSSSTKIDRKVVDQWLTKLPSNFEPTLGITREGPTTSALRASEDKALAISKKIESLVNREDSPLHGRDFNISSMGIDSVQVISLASFIKQSYGVKVDVSRVLDGQMTVRGLAAFIDAELSGTVQEALPAFDAMKEASALVNDIIKNSMPQKTVFVTGGTGFLGTQILRQLCDRPDVGRVIAHVRANSPSDAFIRIKDAAVRAQWWSDYYLTKLDVWCGNLASPKLGLKPKQWASLSGESPNDGLVNGIIHAGAAVNWNAGTEILRAANVNSTAELIKAAISSPARPRLSYVSGGSRWSVGENDQDIANEIAHANGYAQTKYLSELLVKQFAAKYPNQFAIVKPGLILGTPEEGVANTDDFVWRLASGVVDACAFSDDYANAWMYVTSSTRVAEETIAQVFCPAGSMKTVTYMTEGITEREFWEIFHGELKYPLRKVDHETWMETMRKSIQKDTSSHPLWPVSQVFDALQGRLGGEPLQDASFVSPSQKQHVKATIRRNVQFLVEAGFIASPTGKKMKYMADKVFKRSGNVWENVKRMTITA</sequence>
<accession>A0A1W6BT53</accession>
<comment type="function">
    <text evidence="3">Nonribosomal peptide synthase; part of the gene cluster that mediates the biosynthesis of asperphenamate, a rare linear amino acid ester that exhibits antitumor activity towards a number of cell lines (PubMed:29719714). The structure of asperphenamate contains two subunits, N-benzoylphenylalanine and N-benzoylphenylalaninol, which are connected by an inter-molecular ester bond (PubMed:29719714). The first step of asperphenamate biosynthesis is the generation of N-benzoylphenylalaninol by the nonribosomal peptide synthase apmA (PubMed:29719714). Using phenylalanine and benzoic acid as substrates, apmA catalyzes amide bond formation and tethers the intermediate into the NRPS chain. Then, the terminal R domain of apmA catalyzes the reduction reaction to get the shunt product N-benzoylphenylalaninol (PubMed:29719714). Subsequently, the nonribosomal peptide synthase apmB activates the same substrates as does apmA (phenylalanine and benzoic acid) to produce N-benzoylphenylalanine before condensing N-benzoylphenylalanine and N-benzoylphenylalaninol to release asperphenamate (PubMed:29719714).</text>
</comment>
<comment type="catalytic activity">
    <reaction evidence="3">
        <text>benzoate + L-phenylalanine + 2 AH2 + 2 ATP = N-benzoyl-L-phenylalaninol + 2 A + 2 AMP + 2 diphosphate + H(+)</text>
        <dbReference type="Rhea" id="RHEA:59476"/>
        <dbReference type="ChEBI" id="CHEBI:13193"/>
        <dbReference type="ChEBI" id="CHEBI:15378"/>
        <dbReference type="ChEBI" id="CHEBI:16150"/>
        <dbReference type="ChEBI" id="CHEBI:17499"/>
        <dbReference type="ChEBI" id="CHEBI:30616"/>
        <dbReference type="ChEBI" id="CHEBI:33019"/>
        <dbReference type="ChEBI" id="CHEBI:58095"/>
        <dbReference type="ChEBI" id="CHEBI:145107"/>
        <dbReference type="ChEBI" id="CHEBI:456215"/>
    </reaction>
    <physiologicalReaction direction="left-to-right" evidence="3">
        <dbReference type="Rhea" id="RHEA:59477"/>
    </physiologicalReaction>
</comment>
<comment type="pathway">
    <text evidence="3">Secondary metabolite biosynthesis.</text>
</comment>
<comment type="domain">
    <text evidence="6">NRP synthetases are composed of discrete domains (adenylation (A), thiolation (T) or peptidyl carrier protein (PCP) and condensation (C) domains) which when grouped together are referred to as a single module. Each module is responsible for the recognition (via the A domain) and incorporation of a single amino acid into the growing peptide product. Thus, an NRP synthetase is generally composed of one or more modules and can terminate in a thioesterase domain (TE) that releases the newly synthesized peptide from the enzyme. Occasionally, methyltransferase domains (responsible for amino acid methylation) are present within the NRP synthetase. ApmA has the following architecture: A-T-C-A-T-R with a C-terminal reductase (R)-domain that acts in the reductive release of the shunt product N-benzoylphenylalaninol in the two-modular NRPS apmA.</text>
</comment>
<comment type="disruption phenotype">
    <text evidence="3">Completely abolishes the production of asperphenamate.</text>
</comment>
<comment type="similarity">
    <text evidence="5">Belongs to the NRP synthetase family.</text>
</comment>